<evidence type="ECO:0000255" key="1">
    <source>
        <dbReference type="HAMAP-Rule" id="MF_00031"/>
    </source>
</evidence>
<reference key="1">
    <citation type="journal article" date="2006" name="Nat. Biotechnol.">
        <title>Complete genome sequence of the entomopathogenic and metabolically versatile soil bacterium Pseudomonas entomophila.</title>
        <authorList>
            <person name="Vodovar N."/>
            <person name="Vallenet D."/>
            <person name="Cruveiller S."/>
            <person name="Rouy Z."/>
            <person name="Barbe V."/>
            <person name="Acosta C."/>
            <person name="Cattolico L."/>
            <person name="Jubin C."/>
            <person name="Lajus A."/>
            <person name="Segurens B."/>
            <person name="Vacherie B."/>
            <person name="Wincker P."/>
            <person name="Weissenbach J."/>
            <person name="Lemaitre B."/>
            <person name="Medigue C."/>
            <person name="Boccard F."/>
        </authorList>
    </citation>
    <scope>NUCLEOTIDE SEQUENCE [LARGE SCALE GENOMIC DNA]</scope>
    <source>
        <strain>L48</strain>
    </source>
</reference>
<gene>
    <name evidence="1" type="primary">ruvA</name>
    <name type="ordered locus">PSEEN4093</name>
</gene>
<comment type="function">
    <text evidence="1">The RuvA-RuvB-RuvC complex processes Holliday junction (HJ) DNA during genetic recombination and DNA repair, while the RuvA-RuvB complex plays an important role in the rescue of blocked DNA replication forks via replication fork reversal (RFR). RuvA specifically binds to HJ cruciform DNA, conferring on it an open structure. The RuvB hexamer acts as an ATP-dependent pump, pulling dsDNA into and through the RuvAB complex. HJ branch migration allows RuvC to scan DNA until it finds its consensus sequence, where it cleaves and resolves the cruciform DNA.</text>
</comment>
<comment type="subunit">
    <text evidence="1">Homotetramer. Forms an RuvA(8)-RuvB(12)-Holliday junction (HJ) complex. HJ DNA is sandwiched between 2 RuvA tetramers; dsDNA enters through RuvA and exits via RuvB. An RuvB hexamer assembles on each DNA strand where it exits the tetramer. Each RuvB hexamer is contacted by two RuvA subunits (via domain III) on 2 adjacent RuvB subunits; this complex drives branch migration. In the full resolvosome a probable DNA-RuvA(4)-RuvB(12)-RuvC(2) complex forms which resolves the HJ.</text>
</comment>
<comment type="subcellular location">
    <subcellularLocation>
        <location evidence="1">Cytoplasm</location>
    </subcellularLocation>
</comment>
<comment type="domain">
    <text evidence="1">Has three domains with a flexible linker between the domains II and III and assumes an 'L' shape. Domain III is highly mobile and contacts RuvB.</text>
</comment>
<comment type="similarity">
    <text evidence="1">Belongs to the RuvA family.</text>
</comment>
<proteinExistence type="inferred from homology"/>
<feature type="chain" id="PRO_1000002518" description="Holliday junction branch migration complex subunit RuvA">
    <location>
        <begin position="1"/>
        <end position="205"/>
    </location>
</feature>
<feature type="region of interest" description="Domain I" evidence="1">
    <location>
        <begin position="1"/>
        <end position="64"/>
    </location>
</feature>
<feature type="region of interest" description="Domain II" evidence="1">
    <location>
        <begin position="65"/>
        <end position="143"/>
    </location>
</feature>
<feature type="region of interest" description="Flexible linker" evidence="1">
    <location>
        <begin position="144"/>
        <end position="154"/>
    </location>
</feature>
<feature type="region of interest" description="Domain III" evidence="1">
    <location>
        <begin position="154"/>
        <end position="205"/>
    </location>
</feature>
<accession>Q1I6E8</accession>
<name>RUVA_PSEE4</name>
<organism>
    <name type="scientific">Pseudomonas entomophila (strain L48)</name>
    <dbReference type="NCBI Taxonomy" id="384676"/>
    <lineage>
        <taxon>Bacteria</taxon>
        <taxon>Pseudomonadati</taxon>
        <taxon>Pseudomonadota</taxon>
        <taxon>Gammaproteobacteria</taxon>
        <taxon>Pseudomonadales</taxon>
        <taxon>Pseudomonadaceae</taxon>
        <taxon>Pseudomonas</taxon>
    </lineage>
</organism>
<dbReference type="EMBL" id="CT573326">
    <property type="protein sequence ID" value="CAK16787.1"/>
    <property type="molecule type" value="Genomic_DNA"/>
</dbReference>
<dbReference type="RefSeq" id="WP_011535159.1">
    <property type="nucleotide sequence ID" value="NC_008027.1"/>
</dbReference>
<dbReference type="SMR" id="Q1I6E8"/>
<dbReference type="STRING" id="384676.PSEEN4093"/>
<dbReference type="GeneID" id="32807108"/>
<dbReference type="KEGG" id="pen:PSEEN4093"/>
<dbReference type="eggNOG" id="COG0632">
    <property type="taxonomic scope" value="Bacteria"/>
</dbReference>
<dbReference type="HOGENOM" id="CLU_087936_0_0_6"/>
<dbReference type="OrthoDB" id="5293449at2"/>
<dbReference type="Proteomes" id="UP000000658">
    <property type="component" value="Chromosome"/>
</dbReference>
<dbReference type="GO" id="GO:0005737">
    <property type="term" value="C:cytoplasm"/>
    <property type="evidence" value="ECO:0007669"/>
    <property type="project" value="UniProtKB-SubCell"/>
</dbReference>
<dbReference type="GO" id="GO:0009379">
    <property type="term" value="C:Holliday junction helicase complex"/>
    <property type="evidence" value="ECO:0007669"/>
    <property type="project" value="InterPro"/>
</dbReference>
<dbReference type="GO" id="GO:0048476">
    <property type="term" value="C:Holliday junction resolvase complex"/>
    <property type="evidence" value="ECO:0007669"/>
    <property type="project" value="UniProtKB-UniRule"/>
</dbReference>
<dbReference type="GO" id="GO:0005524">
    <property type="term" value="F:ATP binding"/>
    <property type="evidence" value="ECO:0007669"/>
    <property type="project" value="InterPro"/>
</dbReference>
<dbReference type="GO" id="GO:0000400">
    <property type="term" value="F:four-way junction DNA binding"/>
    <property type="evidence" value="ECO:0007669"/>
    <property type="project" value="UniProtKB-UniRule"/>
</dbReference>
<dbReference type="GO" id="GO:0009378">
    <property type="term" value="F:four-way junction helicase activity"/>
    <property type="evidence" value="ECO:0007669"/>
    <property type="project" value="InterPro"/>
</dbReference>
<dbReference type="GO" id="GO:0006310">
    <property type="term" value="P:DNA recombination"/>
    <property type="evidence" value="ECO:0007669"/>
    <property type="project" value="UniProtKB-UniRule"/>
</dbReference>
<dbReference type="GO" id="GO:0006281">
    <property type="term" value="P:DNA repair"/>
    <property type="evidence" value="ECO:0007669"/>
    <property type="project" value="UniProtKB-UniRule"/>
</dbReference>
<dbReference type="CDD" id="cd14332">
    <property type="entry name" value="UBA_RuvA_C"/>
    <property type="match status" value="1"/>
</dbReference>
<dbReference type="Gene3D" id="1.10.150.20">
    <property type="entry name" value="5' to 3' exonuclease, C-terminal subdomain"/>
    <property type="match status" value="1"/>
</dbReference>
<dbReference type="Gene3D" id="1.10.8.10">
    <property type="entry name" value="DNA helicase RuvA subunit, C-terminal domain"/>
    <property type="match status" value="1"/>
</dbReference>
<dbReference type="Gene3D" id="2.40.50.140">
    <property type="entry name" value="Nucleic acid-binding proteins"/>
    <property type="match status" value="1"/>
</dbReference>
<dbReference type="HAMAP" id="MF_00031">
    <property type="entry name" value="DNA_HJ_migration_RuvA"/>
    <property type="match status" value="1"/>
</dbReference>
<dbReference type="InterPro" id="IPR013849">
    <property type="entry name" value="DNA_helicase_Holl-junc_RuvA_I"/>
</dbReference>
<dbReference type="InterPro" id="IPR003583">
    <property type="entry name" value="Hlx-hairpin-Hlx_DNA-bd_motif"/>
</dbReference>
<dbReference type="InterPro" id="IPR012340">
    <property type="entry name" value="NA-bd_OB-fold"/>
</dbReference>
<dbReference type="InterPro" id="IPR000085">
    <property type="entry name" value="RuvA"/>
</dbReference>
<dbReference type="InterPro" id="IPR010994">
    <property type="entry name" value="RuvA_2-like"/>
</dbReference>
<dbReference type="InterPro" id="IPR011114">
    <property type="entry name" value="RuvA_C"/>
</dbReference>
<dbReference type="InterPro" id="IPR036267">
    <property type="entry name" value="RuvA_C_sf"/>
</dbReference>
<dbReference type="NCBIfam" id="TIGR00084">
    <property type="entry name" value="ruvA"/>
    <property type="match status" value="1"/>
</dbReference>
<dbReference type="Pfam" id="PF14520">
    <property type="entry name" value="HHH_5"/>
    <property type="match status" value="1"/>
</dbReference>
<dbReference type="Pfam" id="PF07499">
    <property type="entry name" value="RuvA_C"/>
    <property type="match status" value="1"/>
</dbReference>
<dbReference type="Pfam" id="PF01330">
    <property type="entry name" value="RuvA_N"/>
    <property type="match status" value="1"/>
</dbReference>
<dbReference type="SMART" id="SM00278">
    <property type="entry name" value="HhH1"/>
    <property type="match status" value="2"/>
</dbReference>
<dbReference type="SUPFAM" id="SSF46929">
    <property type="entry name" value="DNA helicase RuvA subunit, C-terminal domain"/>
    <property type="match status" value="1"/>
</dbReference>
<dbReference type="SUPFAM" id="SSF50249">
    <property type="entry name" value="Nucleic acid-binding proteins"/>
    <property type="match status" value="1"/>
</dbReference>
<dbReference type="SUPFAM" id="SSF47781">
    <property type="entry name" value="RuvA domain 2-like"/>
    <property type="match status" value="1"/>
</dbReference>
<protein>
    <recommendedName>
        <fullName evidence="1">Holliday junction branch migration complex subunit RuvA</fullName>
    </recommendedName>
</protein>
<keyword id="KW-0963">Cytoplasm</keyword>
<keyword id="KW-0227">DNA damage</keyword>
<keyword id="KW-0233">DNA recombination</keyword>
<keyword id="KW-0234">DNA repair</keyword>
<keyword id="KW-0238">DNA-binding</keyword>
<sequence length="205" mass="22362">MIGRLRGTLAEKQPPHLIIDVNGVGYELEVPMTTLYRLPKVGEPVTVHTHLVVREDAHLLYGFAEKRERELFRELIRLNGVGPKLALALMSGLEVDELVRCVQAQDASVLVRVPGVGKKTAERLLVELKDRFKAWETSPAMFTLVSDGPLPVASESSAEADAVSALVSLGYKPQEASKAIAAIKDKAGLSSEELIRRSLKGMIAK</sequence>